<sequence length="189" mass="20806">MSRIGKLPISIPAGVTVTLKDDVVTVKGPKGELSQYVNPAINVAIEDGHVTLTENEKEMIDNPKQKHAFHGLYRSLVHNMVVGVSEGYKKELELVGVGYRASNQGNIIELALGYTHNIFIQLPAEVKVETKSERNKNPLIILESCDKQLLGQVCSKIRSFRKPEPYKGKGIKFVGEVIRRKSGKSAGAK</sequence>
<gene>
    <name evidence="1" type="primary">rplF</name>
    <name type="ordered locus">BT_2712</name>
</gene>
<comment type="function">
    <text evidence="1">This protein binds to the 23S rRNA, and is important in its secondary structure. It is located near the subunit interface in the base of the L7/L12 stalk, and near the tRNA binding site of the peptidyltransferase center.</text>
</comment>
<comment type="subunit">
    <text evidence="1">Part of the 50S ribosomal subunit.</text>
</comment>
<comment type="similarity">
    <text evidence="1">Belongs to the universal ribosomal protein uL6 family.</text>
</comment>
<accession>Q8A491</accession>
<reference key="1">
    <citation type="journal article" date="2003" name="Science">
        <title>A genomic view of the human-Bacteroides thetaiotaomicron symbiosis.</title>
        <authorList>
            <person name="Xu J."/>
            <person name="Bjursell M.K."/>
            <person name="Himrod J."/>
            <person name="Deng S."/>
            <person name="Carmichael L.K."/>
            <person name="Chiang H.C."/>
            <person name="Hooper L.V."/>
            <person name="Gordon J.I."/>
        </authorList>
    </citation>
    <scope>NUCLEOTIDE SEQUENCE [LARGE SCALE GENOMIC DNA]</scope>
    <source>
        <strain>ATCC 29148 / DSM 2079 / JCM 5827 / CCUG 10774 / NCTC 10582 / VPI-5482 / E50</strain>
    </source>
</reference>
<organism>
    <name type="scientific">Bacteroides thetaiotaomicron (strain ATCC 29148 / DSM 2079 / JCM 5827 / CCUG 10774 / NCTC 10582 / VPI-5482 / E50)</name>
    <dbReference type="NCBI Taxonomy" id="226186"/>
    <lineage>
        <taxon>Bacteria</taxon>
        <taxon>Pseudomonadati</taxon>
        <taxon>Bacteroidota</taxon>
        <taxon>Bacteroidia</taxon>
        <taxon>Bacteroidales</taxon>
        <taxon>Bacteroidaceae</taxon>
        <taxon>Bacteroides</taxon>
    </lineage>
</organism>
<protein>
    <recommendedName>
        <fullName evidence="1">Large ribosomal subunit protein uL6</fullName>
    </recommendedName>
    <alternativeName>
        <fullName evidence="2">50S ribosomal protein L6</fullName>
    </alternativeName>
</protein>
<feature type="chain" id="PRO_0000265215" description="Large ribosomal subunit protein uL6">
    <location>
        <begin position="1"/>
        <end position="189"/>
    </location>
</feature>
<evidence type="ECO:0000255" key="1">
    <source>
        <dbReference type="HAMAP-Rule" id="MF_01365"/>
    </source>
</evidence>
<evidence type="ECO:0000305" key="2"/>
<keyword id="KW-1185">Reference proteome</keyword>
<keyword id="KW-0687">Ribonucleoprotein</keyword>
<keyword id="KW-0689">Ribosomal protein</keyword>
<keyword id="KW-0694">RNA-binding</keyword>
<keyword id="KW-0699">rRNA-binding</keyword>
<dbReference type="EMBL" id="AE015928">
    <property type="protein sequence ID" value="AAO77818.1"/>
    <property type="molecule type" value="Genomic_DNA"/>
</dbReference>
<dbReference type="RefSeq" id="NP_811624.1">
    <property type="nucleotide sequence ID" value="NC_004663.1"/>
</dbReference>
<dbReference type="RefSeq" id="WP_008765429.1">
    <property type="nucleotide sequence ID" value="NZ_UYXG01000001.1"/>
</dbReference>
<dbReference type="SMR" id="Q8A491"/>
<dbReference type="FunCoup" id="Q8A491">
    <property type="interactions" value="630"/>
</dbReference>
<dbReference type="STRING" id="226186.BT_2712"/>
<dbReference type="PaxDb" id="226186-BT_2712"/>
<dbReference type="EnsemblBacteria" id="AAO77818">
    <property type="protein sequence ID" value="AAO77818"/>
    <property type="gene ID" value="BT_2712"/>
</dbReference>
<dbReference type="GeneID" id="69587572"/>
<dbReference type="KEGG" id="bth:BT_2712"/>
<dbReference type="PATRIC" id="fig|226186.12.peg.2755"/>
<dbReference type="eggNOG" id="COG0097">
    <property type="taxonomic scope" value="Bacteria"/>
</dbReference>
<dbReference type="HOGENOM" id="CLU_065464_1_2_10"/>
<dbReference type="InParanoid" id="Q8A491"/>
<dbReference type="OrthoDB" id="9805007at2"/>
<dbReference type="Proteomes" id="UP000001414">
    <property type="component" value="Chromosome"/>
</dbReference>
<dbReference type="GO" id="GO:0022625">
    <property type="term" value="C:cytosolic large ribosomal subunit"/>
    <property type="evidence" value="ECO:0000318"/>
    <property type="project" value="GO_Central"/>
</dbReference>
<dbReference type="GO" id="GO:0019843">
    <property type="term" value="F:rRNA binding"/>
    <property type="evidence" value="ECO:0007669"/>
    <property type="project" value="UniProtKB-UniRule"/>
</dbReference>
<dbReference type="GO" id="GO:0003735">
    <property type="term" value="F:structural constituent of ribosome"/>
    <property type="evidence" value="ECO:0000318"/>
    <property type="project" value="GO_Central"/>
</dbReference>
<dbReference type="GO" id="GO:0002181">
    <property type="term" value="P:cytoplasmic translation"/>
    <property type="evidence" value="ECO:0000318"/>
    <property type="project" value="GO_Central"/>
</dbReference>
<dbReference type="FunFam" id="3.90.930.12:FF:000002">
    <property type="entry name" value="50S ribosomal protein L6"/>
    <property type="match status" value="1"/>
</dbReference>
<dbReference type="FunFam" id="3.90.930.12:FF:000006">
    <property type="entry name" value="50S ribosomal protein L6"/>
    <property type="match status" value="1"/>
</dbReference>
<dbReference type="Gene3D" id="3.90.930.12">
    <property type="entry name" value="Ribosomal protein L6, alpha-beta domain"/>
    <property type="match status" value="2"/>
</dbReference>
<dbReference type="HAMAP" id="MF_01365_B">
    <property type="entry name" value="Ribosomal_uL6_B"/>
    <property type="match status" value="1"/>
</dbReference>
<dbReference type="InterPro" id="IPR000702">
    <property type="entry name" value="Ribosomal_uL6-like"/>
</dbReference>
<dbReference type="InterPro" id="IPR036789">
    <property type="entry name" value="Ribosomal_uL6-like_a/b-dom_sf"/>
</dbReference>
<dbReference type="InterPro" id="IPR020040">
    <property type="entry name" value="Ribosomal_uL6_a/b-dom"/>
</dbReference>
<dbReference type="InterPro" id="IPR019906">
    <property type="entry name" value="Ribosomal_uL6_bac-type"/>
</dbReference>
<dbReference type="InterPro" id="IPR002358">
    <property type="entry name" value="Ribosomal_uL6_CS"/>
</dbReference>
<dbReference type="NCBIfam" id="TIGR03654">
    <property type="entry name" value="L6_bact"/>
    <property type="match status" value="1"/>
</dbReference>
<dbReference type="PANTHER" id="PTHR11655">
    <property type="entry name" value="60S/50S RIBOSOMAL PROTEIN L6/L9"/>
    <property type="match status" value="1"/>
</dbReference>
<dbReference type="PANTHER" id="PTHR11655:SF14">
    <property type="entry name" value="LARGE RIBOSOMAL SUBUNIT PROTEIN UL6M"/>
    <property type="match status" value="1"/>
</dbReference>
<dbReference type="Pfam" id="PF00347">
    <property type="entry name" value="Ribosomal_L6"/>
    <property type="match status" value="2"/>
</dbReference>
<dbReference type="PIRSF" id="PIRSF002162">
    <property type="entry name" value="Ribosomal_L6"/>
    <property type="match status" value="1"/>
</dbReference>
<dbReference type="PRINTS" id="PR00059">
    <property type="entry name" value="RIBOSOMALL6"/>
</dbReference>
<dbReference type="SUPFAM" id="SSF56053">
    <property type="entry name" value="Ribosomal protein L6"/>
    <property type="match status" value="2"/>
</dbReference>
<dbReference type="PROSITE" id="PS00525">
    <property type="entry name" value="RIBOSOMAL_L6_1"/>
    <property type="match status" value="1"/>
</dbReference>
<name>RL6_BACTN</name>
<proteinExistence type="inferred from homology"/>